<sequence length="470" mass="49733">MVVGDFPIETDTLVIGAGPGGYVAAIRAAQLGQKVTVVEKATLGGVCLNVGCIPSKALINAGHRYENAKHSDDMGITAENVTVDFTKVQEWKASVVNKLTGGVAGLLKGNKVDVVKGEAYFVDSNSVRVMDENSAQTYTFKNAIIATGSRPIELPNFKYSERVLNSTGALALKEIPKKLVVIGGGYIGTELGTAYANFGTELVILEGGDEILPGFEKQMSSLVTRRLKKKGNVEIHTNAMAKGVEERPDGVTVTFEVKGEEKTVDADYVLITVGRRPNTDELGLEQVGIEMTDRGIVKTDKQCRTNVPNIYAIGDIIEGPPLAHKASYEGKIAAEAIAGEPAEIDYLGIPAVVFSEPELASVGYTEAQAKEEGLDIVAAKFPFAANGRALSLNETDGFMKLITRKEDGLVIGAQIAGASASDMISELSLAIEGGMTAEDIAMTIHAHPTLGEITMEAAEVAIGSPIHIVK</sequence>
<reference key="1">
    <citation type="journal article" date="1990" name="J. Bacteriol.">
        <title>Secretory S complex of Bacillus subtilis: sequence analysis and identity to pyruvate dehydrogenase.</title>
        <authorList>
            <person name="Hemilae H.O."/>
            <person name="Palva A."/>
            <person name="Paulin L."/>
            <person name="Arvidson S."/>
            <person name="Palva I."/>
        </authorList>
    </citation>
    <scope>NUCLEOTIDE SEQUENCE [GENOMIC DNA]</scope>
    <source>
        <strain>168</strain>
    </source>
</reference>
<reference key="2">
    <citation type="journal article" date="1996" name="Microbiology">
        <title>The ampS-nprE (124 degrees-127 degrees) region of the Bacillus subtilis 168 chromosome: sequencing of a 27 kb segment and identification of several genes in the area.</title>
        <authorList>
            <person name="Winters P."/>
            <person name="Caldwell R.M."/>
            <person name="Enfield L."/>
            <person name="Ferrari E."/>
        </authorList>
    </citation>
    <scope>NUCLEOTIDE SEQUENCE [GENOMIC DNA]</scope>
    <source>
        <strain>168</strain>
    </source>
</reference>
<reference key="3">
    <citation type="submission" date="1997-07" db="EMBL/GenBank/DDBJ databases">
        <title>Sequence analysis of the mobA-ampS region of the Bacillus subtilis chromosome.</title>
        <authorList>
            <person name="Caldwell R.M."/>
            <person name="Ferrari E."/>
        </authorList>
    </citation>
    <scope>NUCLEOTIDE SEQUENCE [GENOMIC DNA]</scope>
    <source>
        <strain>168</strain>
    </source>
</reference>
<reference key="4">
    <citation type="journal article" date="1997" name="Nature">
        <title>The complete genome sequence of the Gram-positive bacterium Bacillus subtilis.</title>
        <authorList>
            <person name="Kunst F."/>
            <person name="Ogasawara N."/>
            <person name="Moszer I."/>
            <person name="Albertini A.M."/>
            <person name="Alloni G."/>
            <person name="Azevedo V."/>
            <person name="Bertero M.G."/>
            <person name="Bessieres P."/>
            <person name="Bolotin A."/>
            <person name="Borchert S."/>
            <person name="Borriss R."/>
            <person name="Boursier L."/>
            <person name="Brans A."/>
            <person name="Braun M."/>
            <person name="Brignell S.C."/>
            <person name="Bron S."/>
            <person name="Brouillet S."/>
            <person name="Bruschi C.V."/>
            <person name="Caldwell B."/>
            <person name="Capuano V."/>
            <person name="Carter N.M."/>
            <person name="Choi S.-K."/>
            <person name="Codani J.-J."/>
            <person name="Connerton I.F."/>
            <person name="Cummings N.J."/>
            <person name="Daniel R.A."/>
            <person name="Denizot F."/>
            <person name="Devine K.M."/>
            <person name="Duesterhoeft A."/>
            <person name="Ehrlich S.D."/>
            <person name="Emmerson P.T."/>
            <person name="Entian K.-D."/>
            <person name="Errington J."/>
            <person name="Fabret C."/>
            <person name="Ferrari E."/>
            <person name="Foulger D."/>
            <person name="Fritz C."/>
            <person name="Fujita M."/>
            <person name="Fujita Y."/>
            <person name="Fuma S."/>
            <person name="Galizzi A."/>
            <person name="Galleron N."/>
            <person name="Ghim S.-Y."/>
            <person name="Glaser P."/>
            <person name="Goffeau A."/>
            <person name="Golightly E.J."/>
            <person name="Grandi G."/>
            <person name="Guiseppi G."/>
            <person name="Guy B.J."/>
            <person name="Haga K."/>
            <person name="Haiech J."/>
            <person name="Harwood C.R."/>
            <person name="Henaut A."/>
            <person name="Hilbert H."/>
            <person name="Holsappel S."/>
            <person name="Hosono S."/>
            <person name="Hullo M.-F."/>
            <person name="Itaya M."/>
            <person name="Jones L.-M."/>
            <person name="Joris B."/>
            <person name="Karamata D."/>
            <person name="Kasahara Y."/>
            <person name="Klaerr-Blanchard M."/>
            <person name="Klein C."/>
            <person name="Kobayashi Y."/>
            <person name="Koetter P."/>
            <person name="Koningstein G."/>
            <person name="Krogh S."/>
            <person name="Kumano M."/>
            <person name="Kurita K."/>
            <person name="Lapidus A."/>
            <person name="Lardinois S."/>
            <person name="Lauber J."/>
            <person name="Lazarevic V."/>
            <person name="Lee S.-M."/>
            <person name="Levine A."/>
            <person name="Liu H."/>
            <person name="Masuda S."/>
            <person name="Mauel C."/>
            <person name="Medigue C."/>
            <person name="Medina N."/>
            <person name="Mellado R.P."/>
            <person name="Mizuno M."/>
            <person name="Moestl D."/>
            <person name="Nakai S."/>
            <person name="Noback M."/>
            <person name="Noone D."/>
            <person name="O'Reilly M."/>
            <person name="Ogawa K."/>
            <person name="Ogiwara A."/>
            <person name="Oudega B."/>
            <person name="Park S.-H."/>
            <person name="Parro V."/>
            <person name="Pohl T.M."/>
            <person name="Portetelle D."/>
            <person name="Porwollik S."/>
            <person name="Prescott A.M."/>
            <person name="Presecan E."/>
            <person name="Pujic P."/>
            <person name="Purnelle B."/>
            <person name="Rapoport G."/>
            <person name="Rey M."/>
            <person name="Reynolds S."/>
            <person name="Rieger M."/>
            <person name="Rivolta C."/>
            <person name="Rocha E."/>
            <person name="Roche B."/>
            <person name="Rose M."/>
            <person name="Sadaie Y."/>
            <person name="Sato T."/>
            <person name="Scanlan E."/>
            <person name="Schleich S."/>
            <person name="Schroeter R."/>
            <person name="Scoffone F."/>
            <person name="Sekiguchi J."/>
            <person name="Sekowska A."/>
            <person name="Seror S.J."/>
            <person name="Serror P."/>
            <person name="Shin B.-S."/>
            <person name="Soldo B."/>
            <person name="Sorokin A."/>
            <person name="Tacconi E."/>
            <person name="Takagi T."/>
            <person name="Takahashi H."/>
            <person name="Takemaru K."/>
            <person name="Takeuchi M."/>
            <person name="Tamakoshi A."/>
            <person name="Tanaka T."/>
            <person name="Terpstra P."/>
            <person name="Tognoni A."/>
            <person name="Tosato V."/>
            <person name="Uchiyama S."/>
            <person name="Vandenbol M."/>
            <person name="Vannier F."/>
            <person name="Vassarotti A."/>
            <person name="Viari A."/>
            <person name="Wambutt R."/>
            <person name="Wedler E."/>
            <person name="Wedler H."/>
            <person name="Weitzenegger T."/>
            <person name="Winters P."/>
            <person name="Wipat A."/>
            <person name="Yamamoto H."/>
            <person name="Yamane K."/>
            <person name="Yasumoto K."/>
            <person name="Yata K."/>
            <person name="Yoshida K."/>
            <person name="Yoshikawa H.-F."/>
            <person name="Zumstein E."/>
            <person name="Yoshikawa H."/>
            <person name="Danchin A."/>
        </authorList>
    </citation>
    <scope>NUCLEOTIDE SEQUENCE [LARGE SCALE GENOMIC DNA]</scope>
    <source>
        <strain>168</strain>
    </source>
</reference>
<reference key="5">
    <citation type="journal article" date="1991" name="FEMS Microbiol. Lett.">
        <title>Sequence of a PAL-related lipoprotein from Bacillus subtilis.</title>
        <authorList>
            <person name="Hemilae H.O."/>
        </authorList>
    </citation>
    <scope>NUCLEOTIDE SEQUENCE [GENOMIC DNA] OF 461-470</scope>
</reference>
<gene>
    <name type="primary">pdhD</name>
    <name type="synonym">aceD</name>
    <name type="synonym">citL</name>
    <name type="ordered locus">BSU14610</name>
</gene>
<evidence type="ECO:0000250" key="1"/>
<evidence type="ECO:0000305" key="2"/>
<comment type="function">
    <text>Catalyzes the oxidation of dihydrolipoamide to lipoamide.</text>
</comment>
<comment type="catalytic activity">
    <reaction>
        <text>N(6)-[(R)-dihydrolipoyl]-L-lysyl-[protein] + NAD(+) = N(6)-[(R)-lipoyl]-L-lysyl-[protein] + NADH + H(+)</text>
        <dbReference type="Rhea" id="RHEA:15045"/>
        <dbReference type="Rhea" id="RHEA-COMP:10474"/>
        <dbReference type="Rhea" id="RHEA-COMP:10475"/>
        <dbReference type="ChEBI" id="CHEBI:15378"/>
        <dbReference type="ChEBI" id="CHEBI:57540"/>
        <dbReference type="ChEBI" id="CHEBI:57945"/>
        <dbReference type="ChEBI" id="CHEBI:83099"/>
        <dbReference type="ChEBI" id="CHEBI:83100"/>
        <dbReference type="EC" id="1.8.1.4"/>
    </reaction>
</comment>
<comment type="cofactor">
    <cofactor evidence="1">
        <name>FAD</name>
        <dbReference type="ChEBI" id="CHEBI:57692"/>
    </cofactor>
    <text evidence="1">Binds 1 FAD per subunit.</text>
</comment>
<comment type="subunit">
    <text>Homodimer. Component of two multienzyme complexes: pyruvate dehydrogenase complex and oxoglutarate dehydrogenase complex.</text>
</comment>
<comment type="subcellular location">
    <subcellularLocation>
        <location>Cytoplasm</location>
    </subcellularLocation>
</comment>
<comment type="miscellaneous">
    <text>The active site is a redox-active disulfide bond.</text>
</comment>
<comment type="similarity">
    <text evidence="2">Belongs to the class-I pyridine nucleotide-disulfide oxidoreductase family.</text>
</comment>
<protein>
    <recommendedName>
        <fullName>Dihydrolipoyl dehydrogenase</fullName>
        <ecNumber>1.8.1.4</ecNumber>
    </recommendedName>
    <alternativeName>
        <fullName>Dihydrolipoamide dehydrogenase</fullName>
    </alternativeName>
    <alternativeName>
        <fullName>E3 component of pyruvate complex</fullName>
    </alternativeName>
    <alternativeName>
        <fullName>S complex, 50 kDa subunit</fullName>
    </alternativeName>
</protein>
<accession>P21880</accession>
<name>DLDH1_BACSU</name>
<keyword id="KW-0963">Cytoplasm</keyword>
<keyword id="KW-1015">Disulfide bond</keyword>
<keyword id="KW-0274">FAD</keyword>
<keyword id="KW-0285">Flavoprotein</keyword>
<keyword id="KW-0520">NAD</keyword>
<keyword id="KW-0560">Oxidoreductase</keyword>
<keyword id="KW-0676">Redox-active center</keyword>
<keyword id="KW-1185">Reference proteome</keyword>
<feature type="chain" id="PRO_0000068016" description="Dihydrolipoyl dehydrogenase">
    <location>
        <begin position="1"/>
        <end position="470"/>
    </location>
</feature>
<feature type="active site" description="Proton acceptor" evidence="1">
    <location>
        <position position="447"/>
    </location>
</feature>
<feature type="binding site" evidence="1">
    <location>
        <begin position="39"/>
        <end position="47"/>
    </location>
    <ligand>
        <name>FAD</name>
        <dbReference type="ChEBI" id="CHEBI:57692"/>
    </ligand>
</feature>
<feature type="binding site" evidence="1">
    <location>
        <position position="56"/>
    </location>
    <ligand>
        <name>FAD</name>
        <dbReference type="ChEBI" id="CHEBI:57692"/>
    </ligand>
</feature>
<feature type="binding site" evidence="1">
    <location>
        <position position="119"/>
    </location>
    <ligand>
        <name>FAD</name>
        <dbReference type="ChEBI" id="CHEBI:57692"/>
    </ligand>
</feature>
<feature type="binding site" evidence="1">
    <location>
        <begin position="183"/>
        <end position="187"/>
    </location>
    <ligand>
        <name>NAD(+)</name>
        <dbReference type="ChEBI" id="CHEBI:57540"/>
    </ligand>
</feature>
<feature type="binding site" evidence="1">
    <location>
        <position position="206"/>
    </location>
    <ligand>
        <name>NAD(+)</name>
        <dbReference type="ChEBI" id="CHEBI:57540"/>
    </ligand>
</feature>
<feature type="binding site" evidence="1">
    <location>
        <begin position="272"/>
        <end position="275"/>
    </location>
    <ligand>
        <name>NAD(+)</name>
        <dbReference type="ChEBI" id="CHEBI:57540"/>
    </ligand>
</feature>
<feature type="binding site" evidence="1">
    <location>
        <position position="315"/>
    </location>
    <ligand>
        <name>FAD</name>
        <dbReference type="ChEBI" id="CHEBI:57692"/>
    </ligand>
</feature>
<feature type="binding site" evidence="1">
    <location>
        <position position="323"/>
    </location>
    <ligand>
        <name>FAD</name>
        <dbReference type="ChEBI" id="CHEBI:57692"/>
    </ligand>
</feature>
<feature type="disulfide bond" description="Redox-active" evidence="1">
    <location>
        <begin position="47"/>
        <end position="52"/>
    </location>
</feature>
<proteinExistence type="inferred from homology"/>
<dbReference type="EC" id="1.8.1.4"/>
<dbReference type="EMBL" id="M57435">
    <property type="protein sequence ID" value="AAA62684.1"/>
    <property type="molecule type" value="Genomic_DNA"/>
</dbReference>
<dbReference type="EMBL" id="AF012285">
    <property type="protein sequence ID" value="AAC24935.1"/>
    <property type="molecule type" value="Genomic_DNA"/>
</dbReference>
<dbReference type="EMBL" id="AL009126">
    <property type="protein sequence ID" value="CAB13334.1"/>
    <property type="molecule type" value="Genomic_DNA"/>
</dbReference>
<dbReference type="PIR" id="E36718">
    <property type="entry name" value="E36718"/>
</dbReference>
<dbReference type="RefSeq" id="NP_389344.1">
    <property type="nucleotide sequence ID" value="NC_000964.3"/>
</dbReference>
<dbReference type="SMR" id="P21880"/>
<dbReference type="FunCoup" id="P21880">
    <property type="interactions" value="694"/>
</dbReference>
<dbReference type="IntAct" id="P21880">
    <property type="interactions" value="1"/>
</dbReference>
<dbReference type="MINT" id="P21880"/>
<dbReference type="STRING" id="224308.BSU14610"/>
<dbReference type="jPOST" id="P21880"/>
<dbReference type="PaxDb" id="224308-BSU14610"/>
<dbReference type="EnsemblBacteria" id="CAB13334">
    <property type="protein sequence ID" value="CAB13334"/>
    <property type="gene ID" value="BSU_14610"/>
</dbReference>
<dbReference type="GeneID" id="939492"/>
<dbReference type="KEGG" id="bsu:BSU14610"/>
<dbReference type="PATRIC" id="fig|224308.179.peg.1593"/>
<dbReference type="eggNOG" id="COG1249">
    <property type="taxonomic scope" value="Bacteria"/>
</dbReference>
<dbReference type="InParanoid" id="P21880"/>
<dbReference type="OrthoDB" id="9800167at2"/>
<dbReference type="PhylomeDB" id="P21880"/>
<dbReference type="BioCyc" id="BSUB:BSU14610-MONOMER"/>
<dbReference type="BioCyc" id="MetaCyc:MONOMER-11687"/>
<dbReference type="Proteomes" id="UP000001570">
    <property type="component" value="Chromosome"/>
</dbReference>
<dbReference type="GO" id="GO:0005737">
    <property type="term" value="C:cytoplasm"/>
    <property type="evidence" value="ECO:0007669"/>
    <property type="project" value="UniProtKB-SubCell"/>
</dbReference>
<dbReference type="GO" id="GO:0004148">
    <property type="term" value="F:dihydrolipoyl dehydrogenase (NADH) activity"/>
    <property type="evidence" value="ECO:0007669"/>
    <property type="project" value="UniProtKB-EC"/>
</dbReference>
<dbReference type="GO" id="GO:0050660">
    <property type="term" value="F:flavin adenine dinucleotide binding"/>
    <property type="evidence" value="ECO:0000318"/>
    <property type="project" value="GO_Central"/>
</dbReference>
<dbReference type="GO" id="GO:0003955">
    <property type="term" value="F:NAD(P)H dehydrogenase (quinone) activity"/>
    <property type="evidence" value="ECO:0000318"/>
    <property type="project" value="GO_Central"/>
</dbReference>
<dbReference type="FunFam" id="3.30.390.30:FF:000001">
    <property type="entry name" value="Dihydrolipoyl dehydrogenase"/>
    <property type="match status" value="1"/>
</dbReference>
<dbReference type="FunFam" id="3.50.50.60:FF:000037">
    <property type="entry name" value="Dihydrolipoyl dehydrogenase"/>
    <property type="match status" value="1"/>
</dbReference>
<dbReference type="Gene3D" id="3.30.390.30">
    <property type="match status" value="1"/>
</dbReference>
<dbReference type="Gene3D" id="3.50.50.60">
    <property type="entry name" value="FAD/NAD(P)-binding domain"/>
    <property type="match status" value="2"/>
</dbReference>
<dbReference type="InterPro" id="IPR050151">
    <property type="entry name" value="Class-I_Pyr_Nuc-Dis_Oxidored"/>
</dbReference>
<dbReference type="InterPro" id="IPR036188">
    <property type="entry name" value="FAD/NAD-bd_sf"/>
</dbReference>
<dbReference type="InterPro" id="IPR023753">
    <property type="entry name" value="FAD/NAD-binding_dom"/>
</dbReference>
<dbReference type="InterPro" id="IPR016156">
    <property type="entry name" value="FAD/NAD-linked_Rdtase_dimer_sf"/>
</dbReference>
<dbReference type="InterPro" id="IPR006258">
    <property type="entry name" value="Lipoamide_DH"/>
</dbReference>
<dbReference type="InterPro" id="IPR001100">
    <property type="entry name" value="Pyr_nuc-diS_OxRdtase"/>
</dbReference>
<dbReference type="InterPro" id="IPR004099">
    <property type="entry name" value="Pyr_nucl-diS_OxRdtase_dimer"/>
</dbReference>
<dbReference type="InterPro" id="IPR012999">
    <property type="entry name" value="Pyr_OxRdtase_I_AS"/>
</dbReference>
<dbReference type="NCBIfam" id="TIGR01350">
    <property type="entry name" value="lipoamide_DH"/>
    <property type="match status" value="1"/>
</dbReference>
<dbReference type="PANTHER" id="PTHR22912:SF160">
    <property type="entry name" value="DIHYDROLIPOYL DEHYDROGENASE"/>
    <property type="match status" value="1"/>
</dbReference>
<dbReference type="PANTHER" id="PTHR22912">
    <property type="entry name" value="DISULFIDE OXIDOREDUCTASE"/>
    <property type="match status" value="1"/>
</dbReference>
<dbReference type="Pfam" id="PF07992">
    <property type="entry name" value="Pyr_redox_2"/>
    <property type="match status" value="1"/>
</dbReference>
<dbReference type="Pfam" id="PF02852">
    <property type="entry name" value="Pyr_redox_dim"/>
    <property type="match status" value="1"/>
</dbReference>
<dbReference type="PIRSF" id="PIRSF000350">
    <property type="entry name" value="Mercury_reductase_MerA"/>
    <property type="match status" value="1"/>
</dbReference>
<dbReference type="PRINTS" id="PR00368">
    <property type="entry name" value="FADPNR"/>
</dbReference>
<dbReference type="PRINTS" id="PR00411">
    <property type="entry name" value="PNDRDTASEI"/>
</dbReference>
<dbReference type="SUPFAM" id="SSF51905">
    <property type="entry name" value="FAD/NAD(P)-binding domain"/>
    <property type="match status" value="1"/>
</dbReference>
<dbReference type="SUPFAM" id="SSF55424">
    <property type="entry name" value="FAD/NAD-linked reductases, dimerisation (C-terminal) domain"/>
    <property type="match status" value="1"/>
</dbReference>
<dbReference type="PROSITE" id="PS00076">
    <property type="entry name" value="PYRIDINE_REDOX_1"/>
    <property type="match status" value="1"/>
</dbReference>
<organism>
    <name type="scientific">Bacillus subtilis (strain 168)</name>
    <dbReference type="NCBI Taxonomy" id="224308"/>
    <lineage>
        <taxon>Bacteria</taxon>
        <taxon>Bacillati</taxon>
        <taxon>Bacillota</taxon>
        <taxon>Bacilli</taxon>
        <taxon>Bacillales</taxon>
        <taxon>Bacillaceae</taxon>
        <taxon>Bacillus</taxon>
    </lineage>
</organism>